<evidence type="ECO:0000256" key="1">
    <source>
        <dbReference type="SAM" id="MobiDB-lite"/>
    </source>
</evidence>
<evidence type="ECO:0000269" key="2">
    <source>
    </source>
</evidence>
<evidence type="ECO:0000303" key="3">
    <source>
    </source>
</evidence>
<evidence type="ECO:0000305" key="4"/>
<reference key="1">
    <citation type="journal article" date="2005" name="Science">
        <title>The transcriptional landscape of the mammalian genome.</title>
        <authorList>
            <person name="Carninci P."/>
            <person name="Kasukawa T."/>
            <person name="Katayama S."/>
            <person name="Gough J."/>
            <person name="Frith M.C."/>
            <person name="Maeda N."/>
            <person name="Oyama R."/>
            <person name="Ravasi T."/>
            <person name="Lenhard B."/>
            <person name="Wells C."/>
            <person name="Kodzius R."/>
            <person name="Shimokawa K."/>
            <person name="Bajic V.B."/>
            <person name="Brenner S.E."/>
            <person name="Batalov S."/>
            <person name="Forrest A.R."/>
            <person name="Zavolan M."/>
            <person name="Davis M.J."/>
            <person name="Wilming L.G."/>
            <person name="Aidinis V."/>
            <person name="Allen J.E."/>
            <person name="Ambesi-Impiombato A."/>
            <person name="Apweiler R."/>
            <person name="Aturaliya R.N."/>
            <person name="Bailey T.L."/>
            <person name="Bansal M."/>
            <person name="Baxter L."/>
            <person name="Beisel K.W."/>
            <person name="Bersano T."/>
            <person name="Bono H."/>
            <person name="Chalk A.M."/>
            <person name="Chiu K.P."/>
            <person name="Choudhary V."/>
            <person name="Christoffels A."/>
            <person name="Clutterbuck D.R."/>
            <person name="Crowe M.L."/>
            <person name="Dalla E."/>
            <person name="Dalrymple B.P."/>
            <person name="de Bono B."/>
            <person name="Della Gatta G."/>
            <person name="di Bernardo D."/>
            <person name="Down T."/>
            <person name="Engstrom P."/>
            <person name="Fagiolini M."/>
            <person name="Faulkner G."/>
            <person name="Fletcher C.F."/>
            <person name="Fukushima T."/>
            <person name="Furuno M."/>
            <person name="Futaki S."/>
            <person name="Gariboldi M."/>
            <person name="Georgii-Hemming P."/>
            <person name="Gingeras T.R."/>
            <person name="Gojobori T."/>
            <person name="Green R.E."/>
            <person name="Gustincich S."/>
            <person name="Harbers M."/>
            <person name="Hayashi Y."/>
            <person name="Hensch T.K."/>
            <person name="Hirokawa N."/>
            <person name="Hill D."/>
            <person name="Huminiecki L."/>
            <person name="Iacono M."/>
            <person name="Ikeo K."/>
            <person name="Iwama A."/>
            <person name="Ishikawa T."/>
            <person name="Jakt M."/>
            <person name="Kanapin A."/>
            <person name="Katoh M."/>
            <person name="Kawasawa Y."/>
            <person name="Kelso J."/>
            <person name="Kitamura H."/>
            <person name="Kitano H."/>
            <person name="Kollias G."/>
            <person name="Krishnan S.P."/>
            <person name="Kruger A."/>
            <person name="Kummerfeld S.K."/>
            <person name="Kurochkin I.V."/>
            <person name="Lareau L.F."/>
            <person name="Lazarevic D."/>
            <person name="Lipovich L."/>
            <person name="Liu J."/>
            <person name="Liuni S."/>
            <person name="McWilliam S."/>
            <person name="Madan Babu M."/>
            <person name="Madera M."/>
            <person name="Marchionni L."/>
            <person name="Matsuda H."/>
            <person name="Matsuzawa S."/>
            <person name="Miki H."/>
            <person name="Mignone F."/>
            <person name="Miyake S."/>
            <person name="Morris K."/>
            <person name="Mottagui-Tabar S."/>
            <person name="Mulder N."/>
            <person name="Nakano N."/>
            <person name="Nakauchi H."/>
            <person name="Ng P."/>
            <person name="Nilsson R."/>
            <person name="Nishiguchi S."/>
            <person name="Nishikawa S."/>
            <person name="Nori F."/>
            <person name="Ohara O."/>
            <person name="Okazaki Y."/>
            <person name="Orlando V."/>
            <person name="Pang K.C."/>
            <person name="Pavan W.J."/>
            <person name="Pavesi G."/>
            <person name="Pesole G."/>
            <person name="Petrovsky N."/>
            <person name="Piazza S."/>
            <person name="Reed J."/>
            <person name="Reid J.F."/>
            <person name="Ring B.Z."/>
            <person name="Ringwald M."/>
            <person name="Rost B."/>
            <person name="Ruan Y."/>
            <person name="Salzberg S.L."/>
            <person name="Sandelin A."/>
            <person name="Schneider C."/>
            <person name="Schoenbach C."/>
            <person name="Sekiguchi K."/>
            <person name="Semple C.A."/>
            <person name="Seno S."/>
            <person name="Sessa L."/>
            <person name="Sheng Y."/>
            <person name="Shibata Y."/>
            <person name="Shimada H."/>
            <person name="Shimada K."/>
            <person name="Silva D."/>
            <person name="Sinclair B."/>
            <person name="Sperling S."/>
            <person name="Stupka E."/>
            <person name="Sugiura K."/>
            <person name="Sultana R."/>
            <person name="Takenaka Y."/>
            <person name="Taki K."/>
            <person name="Tammoja K."/>
            <person name="Tan S.L."/>
            <person name="Tang S."/>
            <person name="Taylor M.S."/>
            <person name="Tegner J."/>
            <person name="Teichmann S.A."/>
            <person name="Ueda H.R."/>
            <person name="van Nimwegen E."/>
            <person name="Verardo R."/>
            <person name="Wei C.L."/>
            <person name="Yagi K."/>
            <person name="Yamanishi H."/>
            <person name="Zabarovsky E."/>
            <person name="Zhu S."/>
            <person name="Zimmer A."/>
            <person name="Hide W."/>
            <person name="Bult C."/>
            <person name="Grimmond S.M."/>
            <person name="Teasdale R.D."/>
            <person name="Liu E.T."/>
            <person name="Brusic V."/>
            <person name="Quackenbush J."/>
            <person name="Wahlestedt C."/>
            <person name="Mattick J.S."/>
            <person name="Hume D.A."/>
            <person name="Kai C."/>
            <person name="Sasaki D."/>
            <person name="Tomaru Y."/>
            <person name="Fukuda S."/>
            <person name="Kanamori-Katayama M."/>
            <person name="Suzuki M."/>
            <person name="Aoki J."/>
            <person name="Arakawa T."/>
            <person name="Iida J."/>
            <person name="Imamura K."/>
            <person name="Itoh M."/>
            <person name="Kato T."/>
            <person name="Kawaji H."/>
            <person name="Kawagashira N."/>
            <person name="Kawashima T."/>
            <person name="Kojima M."/>
            <person name="Kondo S."/>
            <person name="Konno H."/>
            <person name="Nakano K."/>
            <person name="Ninomiya N."/>
            <person name="Nishio T."/>
            <person name="Okada M."/>
            <person name="Plessy C."/>
            <person name="Shibata K."/>
            <person name="Shiraki T."/>
            <person name="Suzuki S."/>
            <person name="Tagami M."/>
            <person name="Waki K."/>
            <person name="Watahiki A."/>
            <person name="Okamura-Oho Y."/>
            <person name="Suzuki H."/>
            <person name="Kawai J."/>
            <person name="Hayashizaki Y."/>
        </authorList>
    </citation>
    <scope>NUCLEOTIDE SEQUENCE [LARGE SCALE MRNA]</scope>
    <source>
        <strain>C57BL/6J</strain>
        <tissue>Testis</tissue>
    </source>
</reference>
<reference key="2">
    <citation type="journal article" date="2015" name="Cell">
        <title>MAJIN links telomeric DNA to the nuclear membrane by exchanging telomere cap.</title>
        <authorList>
            <person name="Shibuya H."/>
            <person name="Hernandez-Hernandez A."/>
            <person name="Morimoto A."/>
            <person name="Negishi L."/>
            <person name="Hoeoeg C."/>
            <person name="Watanabe Y."/>
        </authorList>
    </citation>
    <scope>FUNCTION</scope>
    <scope>SUBCELLULAR LOCATION</scope>
    <scope>TISSUE SPECIFICITY</scope>
    <scope>IDENTIFICATION BY MASS SPECTROMETRY</scope>
    <scope>IDENTIFICATION IN THE MAJIN-TERB1-TERB2 COMPLEX</scope>
    <scope>DISRUPTION PHENOTYPE</scope>
</reference>
<dbReference type="EMBL" id="AK016695">
    <property type="protein sequence ID" value="BAB30384.1"/>
    <property type="molecule type" value="mRNA"/>
</dbReference>
<dbReference type="CCDS" id="CCDS50688.1"/>
<dbReference type="RefSeq" id="NP_083190.1">
    <property type="nucleotide sequence ID" value="NM_028914.1"/>
</dbReference>
<dbReference type="SMR" id="Q9D494"/>
<dbReference type="CORUM" id="Q9D494"/>
<dbReference type="FunCoup" id="Q9D494">
    <property type="interactions" value="72"/>
</dbReference>
<dbReference type="STRING" id="10090.ENSMUSP00000028661"/>
<dbReference type="GlyGen" id="Q9D494">
    <property type="glycosylation" value="1 site"/>
</dbReference>
<dbReference type="iPTMnet" id="Q9D494"/>
<dbReference type="PhosphoSitePlus" id="Q9D494"/>
<dbReference type="PaxDb" id="10090-ENSMUSP00000028661"/>
<dbReference type="ProteomicsDB" id="263106"/>
<dbReference type="Antibodypedia" id="52480">
    <property type="antibodies" value="6 antibodies from 3 providers"/>
</dbReference>
<dbReference type="Ensembl" id="ENSMUST00000028661.6">
    <property type="protein sequence ID" value="ENSMUSP00000028661.6"/>
    <property type="gene ID" value="ENSMUSG00000027229.6"/>
</dbReference>
<dbReference type="GeneID" id="74401"/>
<dbReference type="KEGG" id="mmu:74401"/>
<dbReference type="UCSC" id="uc008mai.2">
    <property type="organism name" value="mouse"/>
</dbReference>
<dbReference type="AGR" id="MGI:1921651"/>
<dbReference type="CTD" id="145645"/>
<dbReference type="MGI" id="MGI:1921651">
    <property type="gene designation" value="Terb2"/>
</dbReference>
<dbReference type="VEuPathDB" id="HostDB:ENSMUSG00000027229"/>
<dbReference type="eggNOG" id="ENOG502S1BT">
    <property type="taxonomic scope" value="Eukaryota"/>
</dbReference>
<dbReference type="GeneTree" id="ENSGT00390000012336"/>
<dbReference type="HOGENOM" id="CLU_109637_0_0_1"/>
<dbReference type="InParanoid" id="Q9D494"/>
<dbReference type="OMA" id="WFCRSVS"/>
<dbReference type="OrthoDB" id="5278943at2759"/>
<dbReference type="PhylomeDB" id="Q9D494"/>
<dbReference type="TreeFam" id="TF336969"/>
<dbReference type="BioGRID-ORCS" id="74401">
    <property type="hits" value="2 hits in 78 CRISPR screens"/>
</dbReference>
<dbReference type="ChiTaRS" id="Terb2">
    <property type="organism name" value="mouse"/>
</dbReference>
<dbReference type="PRO" id="PR:Q9D494"/>
<dbReference type="Proteomes" id="UP000000589">
    <property type="component" value="Chromosome 2"/>
</dbReference>
<dbReference type="RNAct" id="Q9D494">
    <property type="molecule type" value="protein"/>
</dbReference>
<dbReference type="Bgee" id="ENSMUSG00000027229">
    <property type="expression patterns" value="Expressed in spermatocyte and 23 other cell types or tissues"/>
</dbReference>
<dbReference type="ExpressionAtlas" id="Q9D494">
    <property type="expression patterns" value="baseline and differential"/>
</dbReference>
<dbReference type="GO" id="GO:0000781">
    <property type="term" value="C:chromosome, telomeric region"/>
    <property type="evidence" value="ECO:0000314"/>
    <property type="project" value="UniProtKB"/>
</dbReference>
<dbReference type="GO" id="GO:0005635">
    <property type="term" value="C:nuclear envelope"/>
    <property type="evidence" value="ECO:0000314"/>
    <property type="project" value="MGI"/>
</dbReference>
<dbReference type="GO" id="GO:0005637">
    <property type="term" value="C:nuclear inner membrane"/>
    <property type="evidence" value="ECO:0000314"/>
    <property type="project" value="UniProtKB"/>
</dbReference>
<dbReference type="GO" id="GO:1990918">
    <property type="term" value="P:double-strand break repair involved in meiotic recombination"/>
    <property type="evidence" value="ECO:0000315"/>
    <property type="project" value="MGI"/>
</dbReference>
<dbReference type="GO" id="GO:0007129">
    <property type="term" value="P:homologous chromosome pairing at meiosis"/>
    <property type="evidence" value="ECO:0000315"/>
    <property type="project" value="UniProtKB"/>
</dbReference>
<dbReference type="GO" id="GO:0070197">
    <property type="term" value="P:meiotic attachment of telomere to nuclear envelope"/>
    <property type="evidence" value="ECO:0000315"/>
    <property type="project" value="UniProtKB"/>
</dbReference>
<dbReference type="GO" id="GO:0045141">
    <property type="term" value="P:meiotic telomere clustering"/>
    <property type="evidence" value="ECO:0000315"/>
    <property type="project" value="UniProtKB"/>
</dbReference>
<dbReference type="GO" id="GO:0048477">
    <property type="term" value="P:oogenesis"/>
    <property type="evidence" value="ECO:0000315"/>
    <property type="project" value="MGI"/>
</dbReference>
<dbReference type="GO" id="GO:0007283">
    <property type="term" value="P:spermatogenesis"/>
    <property type="evidence" value="ECO:0000315"/>
    <property type="project" value="MGI"/>
</dbReference>
<dbReference type="GO" id="GO:0007130">
    <property type="term" value="P:synaptonemal complex assembly"/>
    <property type="evidence" value="ECO:0000315"/>
    <property type="project" value="MGI"/>
</dbReference>
<dbReference type="InterPro" id="IPR028065">
    <property type="entry name" value="TERB2"/>
</dbReference>
<dbReference type="PANTHER" id="PTHR35345">
    <property type="entry name" value="TELOMERE REPEATS-BINDING BOUQUET FORMATION PROTEIN 2"/>
    <property type="match status" value="1"/>
</dbReference>
<dbReference type="PANTHER" id="PTHR35345:SF1">
    <property type="entry name" value="TELOMERE REPEATS-BINDING BOUQUET FORMATION PROTEIN 2"/>
    <property type="match status" value="1"/>
</dbReference>
<dbReference type="Pfam" id="PF15101">
    <property type="entry name" value="TERB2"/>
    <property type="match status" value="1"/>
</dbReference>
<name>TERB2_MOUSE</name>
<feature type="chain" id="PRO_0000263718" description="Telomere repeats-binding bouquet formation protein 2">
    <location>
        <begin position="1"/>
        <end position="218"/>
    </location>
</feature>
<feature type="region of interest" description="Disordered" evidence="1">
    <location>
        <begin position="117"/>
        <end position="143"/>
    </location>
</feature>
<sequence length="218" mass="25030">MFQGQRGWFCGSVSQDLRQIWEDEGGMVSDVKAADFLFSCDASHPDTLRIYQSLEYIEDNATVFHAYYLAAIANTEMKNSVALGHFVLPPACLQKEIRRKIGSFIWEQDEKFQIEKHDRMASSDKENIRPTPEHKQELSKSAEHHLTRTPVIEKQMCFPLHSYPVNNMVTGYISIDALEKFLGELHDFTPGSSGYLAYHIQDEINMSAIKNKLRRKLS</sequence>
<protein>
    <recommendedName>
        <fullName evidence="3">Telomere repeats-binding bouquet formation protein 2</fullName>
    </recommendedName>
</protein>
<comment type="function">
    <text evidence="2">Meiosis-specific telomere-associated protein involved in meiotic telomere attachment to the nucleus inner membrane, a crucial step for homologous pairing and synapsis. Component of the MAJIN-TERB1-TERB2 complex, which promotes telomere cap exchange by mediating attachment of telomeric DNA to the inner nuclear membrane and replacement of the protective cap of telomeric chromosomes: in early meiosis, the MAJIN-TERB1-TERB2 complex associates with telomeric DNA and the shelterin/telosome complex. During prophase, the complex matures and promotes release of the shelterin/telosome complex from telomeric DNA.</text>
</comment>
<comment type="subunit">
    <text evidence="2">Component of the MAJIN-TERB1-TERB2 complex, composed of MAJIN, TERB1 and TERB2.</text>
</comment>
<comment type="subcellular location">
    <subcellularLocation>
        <location evidence="2">Chromosome</location>
        <location evidence="2">Telomere</location>
    </subcellularLocation>
    <subcellularLocation>
        <location evidence="2">Nucleus inner membrane</location>
    </subcellularLocation>
    <text evidence="2">Localizes to telomeres throughout meiotic prophase I and disappears in metaphase I. In leptotene spermatocytes, localizes to telomeres that localize to the nucleus inner membrane.</text>
</comment>
<comment type="tissue specificity">
    <text evidence="2">Specifically expressed in germline tissues.</text>
</comment>
<comment type="disruption phenotype">
    <text evidence="2">Mice develop normally, exhibit no overt phenotype, but are infertile (both males and females). Gonads are characterized by the absence of post-meiotic cells.</text>
</comment>
<comment type="similarity">
    <text evidence="4">Belongs to the TERB2 family.</text>
</comment>
<keyword id="KW-0158">Chromosome</keyword>
<keyword id="KW-0469">Meiosis</keyword>
<keyword id="KW-0472">Membrane</keyword>
<keyword id="KW-0539">Nucleus</keyword>
<keyword id="KW-1185">Reference proteome</keyword>
<keyword id="KW-0779">Telomere</keyword>
<accession>Q9D494</accession>
<gene>
    <name evidence="3" type="primary">Terb2</name>
</gene>
<organism>
    <name type="scientific">Mus musculus</name>
    <name type="common">Mouse</name>
    <dbReference type="NCBI Taxonomy" id="10090"/>
    <lineage>
        <taxon>Eukaryota</taxon>
        <taxon>Metazoa</taxon>
        <taxon>Chordata</taxon>
        <taxon>Craniata</taxon>
        <taxon>Vertebrata</taxon>
        <taxon>Euteleostomi</taxon>
        <taxon>Mammalia</taxon>
        <taxon>Eutheria</taxon>
        <taxon>Euarchontoglires</taxon>
        <taxon>Glires</taxon>
        <taxon>Rodentia</taxon>
        <taxon>Myomorpha</taxon>
        <taxon>Muroidea</taxon>
        <taxon>Muridae</taxon>
        <taxon>Murinae</taxon>
        <taxon>Mus</taxon>
        <taxon>Mus</taxon>
    </lineage>
</organism>
<proteinExistence type="evidence at protein level"/>